<accession>Q5R5V3</accession>
<evidence type="ECO:0000250" key="1"/>
<evidence type="ECO:0000250" key="2">
    <source>
        <dbReference type="UniProtKB" id="Q8N335"/>
    </source>
</evidence>
<evidence type="ECO:0000305" key="3"/>
<proteinExistence type="evidence at transcript level"/>
<protein>
    <recommendedName>
        <fullName>Glycerol-3-phosphate dehydrogenase 1-like protein</fullName>
        <ecNumber evidence="2">1.1.1.8</ecNumber>
    </recommendedName>
</protein>
<name>GPD1L_PONAB</name>
<feature type="chain" id="PRO_0000286513" description="Glycerol-3-phosphate dehydrogenase 1-like protein">
    <location>
        <begin position="1"/>
        <end position="351"/>
    </location>
</feature>
<feature type="active site" description="Proton acceptor" evidence="1">
    <location>
        <position position="206"/>
    </location>
</feature>
<feature type="binding site" evidence="2">
    <location>
        <begin position="12"/>
        <end position="17"/>
    </location>
    <ligand>
        <name>NAD(+)</name>
        <dbReference type="ChEBI" id="CHEBI:57540"/>
    </ligand>
</feature>
<feature type="binding site" evidence="1">
    <location>
        <position position="122"/>
    </location>
    <ligand>
        <name>substrate</name>
    </ligand>
</feature>
<feature type="binding site" evidence="2">
    <location>
        <position position="155"/>
    </location>
    <ligand>
        <name>NAD(+)</name>
        <dbReference type="ChEBI" id="CHEBI:57540"/>
    </ligand>
</feature>
<feature type="binding site" evidence="1">
    <location>
        <begin position="271"/>
        <end position="272"/>
    </location>
    <ligand>
        <name>substrate</name>
    </ligand>
</feature>
<feature type="binding site" evidence="1">
    <location>
        <position position="271"/>
    </location>
    <ligand>
        <name>NAD(+)</name>
        <dbReference type="ChEBI" id="CHEBI:57540"/>
    </ligand>
</feature>
<feature type="binding site" evidence="2">
    <location>
        <position position="298"/>
    </location>
    <ligand>
        <name>NAD(+)</name>
        <dbReference type="ChEBI" id="CHEBI:57540"/>
    </ligand>
</feature>
<feature type="binding site" evidence="1">
    <location>
        <position position="300"/>
    </location>
    <ligand>
        <name>NAD(+)</name>
        <dbReference type="ChEBI" id="CHEBI:57540"/>
    </ligand>
</feature>
<organism>
    <name type="scientific">Pongo abelii</name>
    <name type="common">Sumatran orangutan</name>
    <name type="synonym">Pongo pygmaeus abelii</name>
    <dbReference type="NCBI Taxonomy" id="9601"/>
    <lineage>
        <taxon>Eukaryota</taxon>
        <taxon>Metazoa</taxon>
        <taxon>Chordata</taxon>
        <taxon>Craniata</taxon>
        <taxon>Vertebrata</taxon>
        <taxon>Euteleostomi</taxon>
        <taxon>Mammalia</taxon>
        <taxon>Eutheria</taxon>
        <taxon>Euarchontoglires</taxon>
        <taxon>Primates</taxon>
        <taxon>Haplorrhini</taxon>
        <taxon>Catarrhini</taxon>
        <taxon>Hominidae</taxon>
        <taxon>Pongo</taxon>
    </lineage>
</organism>
<sequence>MAAAPLKVCIVGSGNWGSAVAKIIGNNVKKLQKFASTVKMWVFEETVNGRKLTDIINNDHENVKYLPGHKLPENVVAISNLSEAVQDADLLVFVIPHQFIHRICDEITGRVPKKALGITLIKGIDEGPEGLKLISDIIREKMGIDISVLMGANIANEVAAEKFCETTIGSKVMENGLLFKELLQTPNFRITVVDDADTVELCGALKNIVAVGAGFCDGLRCGDNTKAAVIRLGLMEMIAFARIFCKGQVSTATFLESCGVADLITTCYGGRNRRVAEAFARTGKTIEELEKEMLNGQKLQGPQTSAEVYRILKQKGLLDKFPLFTAVYQICYESRPVQGMLSCLQSHPEHT</sequence>
<keyword id="KW-0963">Cytoplasm</keyword>
<keyword id="KW-0520">NAD</keyword>
<keyword id="KW-0560">Oxidoreductase</keyword>
<keyword id="KW-1185">Reference proteome</keyword>
<comment type="function">
    <text evidence="2">Plays a role in regulating cardiac sodium current; decreased enzymatic activity with resulting increased levels of glycerol 3-phosphate activating the DPD1L-dependent SCN5A phosphorylation pathway, may ultimately lead to decreased sodium current; cardiac sodium current may also be reduced due to alterations of NAD(H) balance induced by DPD1L.</text>
</comment>
<comment type="catalytic activity">
    <reaction evidence="2">
        <text>sn-glycerol 3-phosphate + NAD(+) = dihydroxyacetone phosphate + NADH + H(+)</text>
        <dbReference type="Rhea" id="RHEA:11092"/>
        <dbReference type="ChEBI" id="CHEBI:15378"/>
        <dbReference type="ChEBI" id="CHEBI:57540"/>
        <dbReference type="ChEBI" id="CHEBI:57597"/>
        <dbReference type="ChEBI" id="CHEBI:57642"/>
        <dbReference type="ChEBI" id="CHEBI:57945"/>
        <dbReference type="EC" id="1.1.1.8"/>
    </reaction>
    <physiologicalReaction direction="left-to-right" evidence="2">
        <dbReference type="Rhea" id="RHEA:11093"/>
    </physiologicalReaction>
</comment>
<comment type="subunit">
    <text evidence="2">Interacts with SCN5A.</text>
</comment>
<comment type="subcellular location">
    <subcellularLocation>
        <location evidence="3">Cytoplasm</location>
    </subcellularLocation>
</comment>
<comment type="similarity">
    <text evidence="3">Belongs to the NAD-dependent glycerol-3-phosphate dehydrogenase family.</text>
</comment>
<reference key="1">
    <citation type="submission" date="2004-11" db="EMBL/GenBank/DDBJ databases">
        <authorList>
            <consortium name="The German cDNA consortium"/>
        </authorList>
    </citation>
    <scope>NUCLEOTIDE SEQUENCE [LARGE SCALE MRNA]</scope>
    <source>
        <tissue>Brain cortex</tissue>
    </source>
</reference>
<dbReference type="EC" id="1.1.1.8" evidence="2"/>
<dbReference type="EMBL" id="CR860749">
    <property type="protein sequence ID" value="CAH92863.1"/>
    <property type="molecule type" value="mRNA"/>
</dbReference>
<dbReference type="RefSeq" id="NP_001126675.1">
    <property type="nucleotide sequence ID" value="NM_001133203.1"/>
</dbReference>
<dbReference type="SMR" id="Q5R5V3"/>
<dbReference type="FunCoup" id="Q5R5V3">
    <property type="interactions" value="1310"/>
</dbReference>
<dbReference type="STRING" id="9601.ENSPPYP00000015713"/>
<dbReference type="GeneID" id="100173675"/>
<dbReference type="KEGG" id="pon:100173675"/>
<dbReference type="CTD" id="23171"/>
<dbReference type="InParanoid" id="Q5R5V3"/>
<dbReference type="OrthoDB" id="10263760at2759"/>
<dbReference type="Proteomes" id="UP000001595">
    <property type="component" value="Unplaced"/>
</dbReference>
<dbReference type="GO" id="GO:0005829">
    <property type="term" value="C:cytosol"/>
    <property type="evidence" value="ECO:0007669"/>
    <property type="project" value="TreeGrafter"/>
</dbReference>
<dbReference type="GO" id="GO:0141152">
    <property type="term" value="F:glycerol-3-phosphate dehydrogenase (NAD+) activity"/>
    <property type="evidence" value="ECO:0007669"/>
    <property type="project" value="UniProtKB-EC"/>
</dbReference>
<dbReference type="GO" id="GO:0051287">
    <property type="term" value="F:NAD binding"/>
    <property type="evidence" value="ECO:0007669"/>
    <property type="project" value="InterPro"/>
</dbReference>
<dbReference type="GO" id="GO:0042803">
    <property type="term" value="F:protein homodimerization activity"/>
    <property type="evidence" value="ECO:0007669"/>
    <property type="project" value="InterPro"/>
</dbReference>
<dbReference type="GO" id="GO:0005975">
    <property type="term" value="P:carbohydrate metabolic process"/>
    <property type="evidence" value="ECO:0007669"/>
    <property type="project" value="InterPro"/>
</dbReference>
<dbReference type="GO" id="GO:0046168">
    <property type="term" value="P:glycerol-3-phosphate catabolic process"/>
    <property type="evidence" value="ECO:0007669"/>
    <property type="project" value="InterPro"/>
</dbReference>
<dbReference type="FunFam" id="3.40.50.720:FF:000088">
    <property type="entry name" value="Glycerol-3-phosphate dehydrogenase [NAD(+)]"/>
    <property type="match status" value="1"/>
</dbReference>
<dbReference type="FunFam" id="1.10.1040.10:FF:000084">
    <property type="entry name" value="Glycerol-3-phosphate dehydrogenase [NAD(+)], cytoplasmic"/>
    <property type="match status" value="1"/>
</dbReference>
<dbReference type="Gene3D" id="1.10.1040.10">
    <property type="entry name" value="N-(1-d-carboxylethyl)-l-norvaline Dehydrogenase, domain 2"/>
    <property type="match status" value="1"/>
</dbReference>
<dbReference type="Gene3D" id="3.40.50.720">
    <property type="entry name" value="NAD(P)-binding Rossmann-like Domain"/>
    <property type="match status" value="1"/>
</dbReference>
<dbReference type="InterPro" id="IPR008927">
    <property type="entry name" value="6-PGluconate_DH-like_C_sf"/>
</dbReference>
<dbReference type="InterPro" id="IPR013328">
    <property type="entry name" value="6PGD_dom2"/>
</dbReference>
<dbReference type="InterPro" id="IPR006168">
    <property type="entry name" value="G3P_DH_NAD-dep"/>
</dbReference>
<dbReference type="InterPro" id="IPR006109">
    <property type="entry name" value="G3P_DH_NAD-dep_C"/>
</dbReference>
<dbReference type="InterPro" id="IPR017751">
    <property type="entry name" value="G3P_DH_NAD-dep_euk"/>
</dbReference>
<dbReference type="InterPro" id="IPR011128">
    <property type="entry name" value="G3P_DH_NAD-dep_N"/>
</dbReference>
<dbReference type="InterPro" id="IPR036291">
    <property type="entry name" value="NAD(P)-bd_dom_sf"/>
</dbReference>
<dbReference type="NCBIfam" id="TIGR03376">
    <property type="entry name" value="glycerol3P_DH"/>
    <property type="match status" value="1"/>
</dbReference>
<dbReference type="PANTHER" id="PTHR11728">
    <property type="entry name" value="GLYCEROL-3-PHOSPHATE DEHYDROGENASE"/>
    <property type="match status" value="1"/>
</dbReference>
<dbReference type="PANTHER" id="PTHR11728:SF7">
    <property type="entry name" value="GLYCEROL-3-PHOSPHATE DEHYDROGENASE 1-LIKE PROTEIN"/>
    <property type="match status" value="1"/>
</dbReference>
<dbReference type="Pfam" id="PF07479">
    <property type="entry name" value="NAD_Gly3P_dh_C"/>
    <property type="match status" value="1"/>
</dbReference>
<dbReference type="Pfam" id="PF01210">
    <property type="entry name" value="NAD_Gly3P_dh_N"/>
    <property type="match status" value="1"/>
</dbReference>
<dbReference type="PIRSF" id="PIRSF000114">
    <property type="entry name" value="Glycerol-3-P_dh"/>
    <property type="match status" value="1"/>
</dbReference>
<dbReference type="PRINTS" id="PR00077">
    <property type="entry name" value="GPDHDRGNASE"/>
</dbReference>
<dbReference type="SUPFAM" id="SSF48179">
    <property type="entry name" value="6-phosphogluconate dehydrogenase C-terminal domain-like"/>
    <property type="match status" value="1"/>
</dbReference>
<dbReference type="SUPFAM" id="SSF51735">
    <property type="entry name" value="NAD(P)-binding Rossmann-fold domains"/>
    <property type="match status" value="1"/>
</dbReference>
<gene>
    <name type="primary">GPD1L</name>
</gene>